<accession>P83862</accession>
<organism evidence="5">
    <name type="scientific">Bos taurus</name>
    <name type="common">Bovine</name>
    <dbReference type="NCBI Taxonomy" id="9913"/>
    <lineage>
        <taxon>Eukaryota</taxon>
        <taxon>Metazoa</taxon>
        <taxon>Chordata</taxon>
        <taxon>Craniata</taxon>
        <taxon>Vertebrata</taxon>
        <taxon>Euteleostomi</taxon>
        <taxon>Mammalia</taxon>
        <taxon>Eutheria</taxon>
        <taxon>Laurasiatheria</taxon>
        <taxon>Artiodactyla</taxon>
        <taxon>Ruminantia</taxon>
        <taxon>Pecora</taxon>
        <taxon>Bovidae</taxon>
        <taxon>Bovinae</taxon>
        <taxon>Bos</taxon>
    </lineage>
</organism>
<comment type="function">
    <text evidence="1">Stimulates feeding behavior, metabolic rate and locomotor activity and increases blood pressure. May have orexigenic activity. May promote aldosterone secretion by the adrenal gland (By similarity).</text>
</comment>
<comment type="subunit">
    <text evidence="1">Ligand for the G-protein coupled receptor QRFPR/GPR103.</text>
</comment>
<comment type="subcellular location">
    <subcellularLocation>
        <location>Secreted</location>
    </subcellularLocation>
</comment>
<comment type="tissue specificity">
    <text evidence="3">Expressed in the hypothalamus.</text>
</comment>
<comment type="similarity">
    <text evidence="4">Belongs to the RFamide neuropeptide family.</text>
</comment>
<feature type="signal peptide" evidence="2">
    <location>
        <begin position="1"/>
        <end position="18"/>
    </location>
</feature>
<feature type="propeptide" id="PRO_0000010084" evidence="2 4">
    <location>
        <begin position="19"/>
        <end position="88"/>
    </location>
</feature>
<feature type="peptide" id="PRO_0000010085" description="QRF-amide" evidence="4">
    <location>
        <begin position="89"/>
        <end position="131"/>
    </location>
</feature>
<feature type="modified residue" description="Phenylalanine amide" evidence="1">
    <location>
        <position position="131"/>
    </location>
</feature>
<sequence>MRSPYSLPYLLFLPLGACFPVLDTEEPVDAVGGTGREMSWMDPARGRPFPWGSPGWPRAPYPHALLVTAKELRASGKARAGFQLRLGRQDDGSEATGLLLGEAEKVGGLLGTLAEELNGYSRKKGGFSFRFGRR</sequence>
<proteinExistence type="evidence at transcript level"/>
<gene>
    <name evidence="5" type="primary">QRFP</name>
</gene>
<reference evidence="4" key="1">
    <citation type="journal article" date="2003" name="J. Biol. Chem.">
        <title>A new peptidic ligand and its receptor regulating adrenal function in rats.</title>
        <authorList>
            <person name="Fukusumi S."/>
            <person name="Yoshida H."/>
            <person name="Fujii R."/>
            <person name="Maruyama M."/>
            <person name="Komatsu H."/>
            <person name="Habata Y."/>
            <person name="Shintani Y."/>
            <person name="Hinuma S."/>
            <person name="Fujino M."/>
        </authorList>
    </citation>
    <scope>NUCLEOTIDE SEQUENCE [MRNA]</scope>
    <scope>TISSUE SPECIFICITY</scope>
    <source>
        <tissue evidence="3">Hypothalamus</tissue>
    </source>
</reference>
<evidence type="ECO:0000250" key="1"/>
<evidence type="ECO:0000255" key="2"/>
<evidence type="ECO:0000269" key="3">
    <source>
    </source>
</evidence>
<evidence type="ECO:0000305" key="4"/>
<evidence type="ECO:0000312" key="5">
    <source>
        <dbReference type="EMBL" id="BAC98935.1"/>
    </source>
</evidence>
<protein>
    <recommendedName>
        <fullName>Orexigenic neuropeptide QRFP</fullName>
    </recommendedName>
    <component>
        <recommendedName>
            <fullName>QRF-amide</fullName>
        </recommendedName>
        <alternativeName>
            <fullName>Neuropeptide RF-amide</fullName>
        </alternativeName>
        <alternativeName>
            <fullName>Pyroglutamylated arginine-phenylalanine-amide peptide</fullName>
        </alternativeName>
    </component>
</protein>
<dbReference type="EMBL" id="AB109626">
    <property type="protein sequence ID" value="BAC98935.1"/>
    <property type="molecule type" value="mRNA"/>
</dbReference>
<dbReference type="RefSeq" id="NP_937865.1">
    <property type="nucleotide sequence ID" value="NM_198222.1"/>
</dbReference>
<dbReference type="SMR" id="P83862"/>
<dbReference type="FunCoup" id="P83862">
    <property type="interactions" value="26"/>
</dbReference>
<dbReference type="STRING" id="9913.ENSBTAP00000023922"/>
<dbReference type="PaxDb" id="9913-ENSBTAP00000023922"/>
<dbReference type="GeneID" id="379045"/>
<dbReference type="KEGG" id="bta:379045"/>
<dbReference type="CTD" id="347148"/>
<dbReference type="eggNOG" id="ENOG502S84J">
    <property type="taxonomic scope" value="Eukaryota"/>
</dbReference>
<dbReference type="InParanoid" id="P83862"/>
<dbReference type="OrthoDB" id="9831857at2759"/>
<dbReference type="Proteomes" id="UP000009136">
    <property type="component" value="Unplaced"/>
</dbReference>
<dbReference type="GO" id="GO:0005576">
    <property type="term" value="C:extracellular region"/>
    <property type="evidence" value="ECO:0007669"/>
    <property type="project" value="UniProtKB-SubCell"/>
</dbReference>
<dbReference type="GO" id="GO:0005184">
    <property type="term" value="F:neuropeptide hormone activity"/>
    <property type="evidence" value="ECO:0000250"/>
    <property type="project" value="UniProtKB"/>
</dbReference>
<dbReference type="GO" id="GO:0031854">
    <property type="term" value="F:orexigenic neuropeptide QRFP receptor binding"/>
    <property type="evidence" value="ECO:0000250"/>
    <property type="project" value="UniProtKB"/>
</dbReference>
<dbReference type="GO" id="GO:0007626">
    <property type="term" value="P:locomotory behavior"/>
    <property type="evidence" value="ECO:0000250"/>
    <property type="project" value="UniProtKB"/>
</dbReference>
<dbReference type="GO" id="GO:0007218">
    <property type="term" value="P:neuropeptide signaling pathway"/>
    <property type="evidence" value="ECO:0000250"/>
    <property type="project" value="UniProtKB"/>
</dbReference>
<dbReference type="GO" id="GO:0045777">
    <property type="term" value="P:positive regulation of blood pressure"/>
    <property type="evidence" value="ECO:0000250"/>
    <property type="project" value="UniProtKB"/>
</dbReference>
<dbReference type="GO" id="GO:0060259">
    <property type="term" value="P:regulation of feeding behavior"/>
    <property type="evidence" value="ECO:0000250"/>
    <property type="project" value="UniProtKB"/>
</dbReference>
<dbReference type="InterPro" id="IPR024565">
    <property type="entry name" value="P518"/>
</dbReference>
<dbReference type="PANTHER" id="PTHR36476">
    <property type="entry name" value="OREXIGENIC NEUROPEPTIDE QRFP"/>
    <property type="match status" value="1"/>
</dbReference>
<dbReference type="PANTHER" id="PTHR36476:SF1">
    <property type="entry name" value="OREXIGENIC NEUROPEPTIDE QRFP"/>
    <property type="match status" value="1"/>
</dbReference>
<dbReference type="Pfam" id="PF11109">
    <property type="entry name" value="RFamide_26RFa"/>
    <property type="match status" value="1"/>
</dbReference>
<name>OX26_BOVIN</name>
<keyword id="KW-0027">Amidation</keyword>
<keyword id="KW-0527">Neuropeptide</keyword>
<keyword id="KW-1185">Reference proteome</keyword>
<keyword id="KW-0964">Secreted</keyword>
<keyword id="KW-0732">Signal</keyword>